<accession>B8GW64</accession>
<evidence type="ECO:0000255" key="1">
    <source>
        <dbReference type="HAMAP-Rule" id="MF_01227"/>
    </source>
</evidence>
<reference key="1">
    <citation type="journal article" date="2010" name="J. Bacteriol.">
        <title>The genetic basis of laboratory adaptation in Caulobacter crescentus.</title>
        <authorList>
            <person name="Marks M.E."/>
            <person name="Castro-Rojas C.M."/>
            <person name="Teiling C."/>
            <person name="Du L."/>
            <person name="Kapatral V."/>
            <person name="Walunas T.L."/>
            <person name="Crosson S."/>
        </authorList>
    </citation>
    <scope>NUCLEOTIDE SEQUENCE [LARGE SCALE GENOMIC DNA]</scope>
    <source>
        <strain>NA1000 / CB15N</strain>
    </source>
</reference>
<keyword id="KW-0067">ATP-binding</keyword>
<keyword id="KW-0315">Glutamine amidotransferase</keyword>
<keyword id="KW-0436">Ligase</keyword>
<keyword id="KW-0460">Magnesium</keyword>
<keyword id="KW-0479">Metal-binding</keyword>
<keyword id="KW-0547">Nucleotide-binding</keyword>
<keyword id="KW-0665">Pyrimidine biosynthesis</keyword>
<keyword id="KW-1185">Reference proteome</keyword>
<comment type="function">
    <text evidence="1">Catalyzes the ATP-dependent amination of UTP to CTP with either L-glutamine or ammonia as the source of nitrogen. Regulates intracellular CTP levels through interactions with the four ribonucleotide triphosphates.</text>
</comment>
<comment type="catalytic activity">
    <reaction evidence="1">
        <text>UTP + L-glutamine + ATP + H2O = CTP + L-glutamate + ADP + phosphate + 2 H(+)</text>
        <dbReference type="Rhea" id="RHEA:26426"/>
        <dbReference type="ChEBI" id="CHEBI:15377"/>
        <dbReference type="ChEBI" id="CHEBI:15378"/>
        <dbReference type="ChEBI" id="CHEBI:29985"/>
        <dbReference type="ChEBI" id="CHEBI:30616"/>
        <dbReference type="ChEBI" id="CHEBI:37563"/>
        <dbReference type="ChEBI" id="CHEBI:43474"/>
        <dbReference type="ChEBI" id="CHEBI:46398"/>
        <dbReference type="ChEBI" id="CHEBI:58359"/>
        <dbReference type="ChEBI" id="CHEBI:456216"/>
        <dbReference type="EC" id="6.3.4.2"/>
    </reaction>
</comment>
<comment type="catalytic activity">
    <reaction evidence="1">
        <text>L-glutamine + H2O = L-glutamate + NH4(+)</text>
        <dbReference type="Rhea" id="RHEA:15889"/>
        <dbReference type="ChEBI" id="CHEBI:15377"/>
        <dbReference type="ChEBI" id="CHEBI:28938"/>
        <dbReference type="ChEBI" id="CHEBI:29985"/>
        <dbReference type="ChEBI" id="CHEBI:58359"/>
    </reaction>
</comment>
<comment type="catalytic activity">
    <reaction evidence="1">
        <text>UTP + NH4(+) + ATP = CTP + ADP + phosphate + 2 H(+)</text>
        <dbReference type="Rhea" id="RHEA:16597"/>
        <dbReference type="ChEBI" id="CHEBI:15378"/>
        <dbReference type="ChEBI" id="CHEBI:28938"/>
        <dbReference type="ChEBI" id="CHEBI:30616"/>
        <dbReference type="ChEBI" id="CHEBI:37563"/>
        <dbReference type="ChEBI" id="CHEBI:43474"/>
        <dbReference type="ChEBI" id="CHEBI:46398"/>
        <dbReference type="ChEBI" id="CHEBI:456216"/>
    </reaction>
</comment>
<comment type="activity regulation">
    <text evidence="1">Allosterically activated by GTP, when glutamine is the substrate; GTP has no effect on the reaction when ammonia is the substrate. The allosteric effector GTP functions by stabilizing the protein conformation that binds the tetrahedral intermediate(s) formed during glutamine hydrolysis. Inhibited by the product CTP, via allosteric rather than competitive inhibition.</text>
</comment>
<comment type="pathway">
    <text evidence="1">Pyrimidine metabolism; CTP biosynthesis via de novo pathway; CTP from UDP: step 2/2.</text>
</comment>
<comment type="subunit">
    <text evidence="1">Homotetramer.</text>
</comment>
<comment type="miscellaneous">
    <text evidence="1">CTPSs have evolved a hybrid strategy for distinguishing between UTP and CTP. The overlapping regions of the product feedback inhibitory and substrate sites recognize a common feature in both compounds, the triphosphate moiety. To differentiate isosteric substrate and product pyrimidine rings, an additional pocket far from the expected kinase/ligase catalytic site, specifically recognizes the cytosine and ribose portions of the product inhibitor.</text>
</comment>
<comment type="similarity">
    <text evidence="1">Belongs to the CTP synthase family.</text>
</comment>
<dbReference type="EC" id="6.3.4.2" evidence="1"/>
<dbReference type="EMBL" id="CP001340">
    <property type="protein sequence ID" value="ACL95256.1"/>
    <property type="molecule type" value="Genomic_DNA"/>
</dbReference>
<dbReference type="RefSeq" id="WP_010919588.1">
    <property type="nucleotide sequence ID" value="NC_011916.1"/>
</dbReference>
<dbReference type="RefSeq" id="YP_002517164.1">
    <property type="nucleotide sequence ID" value="NC_011916.1"/>
</dbReference>
<dbReference type="SMR" id="B8GW64"/>
<dbReference type="MEROPS" id="C26.964"/>
<dbReference type="GeneID" id="7331257"/>
<dbReference type="KEGG" id="ccs:CCNA_01791"/>
<dbReference type="PATRIC" id="fig|565050.3.peg.1763"/>
<dbReference type="HOGENOM" id="CLU_011675_5_0_5"/>
<dbReference type="OrthoDB" id="9801107at2"/>
<dbReference type="PhylomeDB" id="B8GW64"/>
<dbReference type="UniPathway" id="UPA00159">
    <property type="reaction ID" value="UER00277"/>
</dbReference>
<dbReference type="Proteomes" id="UP000001364">
    <property type="component" value="Chromosome"/>
</dbReference>
<dbReference type="GO" id="GO:0005829">
    <property type="term" value="C:cytosol"/>
    <property type="evidence" value="ECO:0007669"/>
    <property type="project" value="TreeGrafter"/>
</dbReference>
<dbReference type="GO" id="GO:0005524">
    <property type="term" value="F:ATP binding"/>
    <property type="evidence" value="ECO:0007669"/>
    <property type="project" value="UniProtKB-KW"/>
</dbReference>
<dbReference type="GO" id="GO:0003883">
    <property type="term" value="F:CTP synthase activity"/>
    <property type="evidence" value="ECO:0007669"/>
    <property type="project" value="UniProtKB-UniRule"/>
</dbReference>
<dbReference type="GO" id="GO:0004359">
    <property type="term" value="F:glutaminase activity"/>
    <property type="evidence" value="ECO:0007669"/>
    <property type="project" value="RHEA"/>
</dbReference>
<dbReference type="GO" id="GO:0042802">
    <property type="term" value="F:identical protein binding"/>
    <property type="evidence" value="ECO:0007669"/>
    <property type="project" value="TreeGrafter"/>
</dbReference>
<dbReference type="GO" id="GO:0046872">
    <property type="term" value="F:metal ion binding"/>
    <property type="evidence" value="ECO:0007669"/>
    <property type="project" value="UniProtKB-KW"/>
</dbReference>
<dbReference type="GO" id="GO:0044210">
    <property type="term" value="P:'de novo' CTP biosynthetic process"/>
    <property type="evidence" value="ECO:0007669"/>
    <property type="project" value="UniProtKB-UniRule"/>
</dbReference>
<dbReference type="GO" id="GO:0019856">
    <property type="term" value="P:pyrimidine nucleobase biosynthetic process"/>
    <property type="evidence" value="ECO:0007669"/>
    <property type="project" value="TreeGrafter"/>
</dbReference>
<dbReference type="CDD" id="cd03113">
    <property type="entry name" value="CTPS_N"/>
    <property type="match status" value="1"/>
</dbReference>
<dbReference type="CDD" id="cd01746">
    <property type="entry name" value="GATase1_CTP_Synthase"/>
    <property type="match status" value="1"/>
</dbReference>
<dbReference type="FunFam" id="3.40.50.300:FF:000009">
    <property type="entry name" value="CTP synthase"/>
    <property type="match status" value="1"/>
</dbReference>
<dbReference type="FunFam" id="3.40.50.880:FF:000002">
    <property type="entry name" value="CTP synthase"/>
    <property type="match status" value="1"/>
</dbReference>
<dbReference type="Gene3D" id="3.40.50.880">
    <property type="match status" value="1"/>
</dbReference>
<dbReference type="Gene3D" id="3.40.50.300">
    <property type="entry name" value="P-loop containing nucleotide triphosphate hydrolases"/>
    <property type="match status" value="1"/>
</dbReference>
<dbReference type="HAMAP" id="MF_01227">
    <property type="entry name" value="PyrG"/>
    <property type="match status" value="1"/>
</dbReference>
<dbReference type="InterPro" id="IPR029062">
    <property type="entry name" value="Class_I_gatase-like"/>
</dbReference>
<dbReference type="InterPro" id="IPR004468">
    <property type="entry name" value="CTP_synthase"/>
</dbReference>
<dbReference type="InterPro" id="IPR017456">
    <property type="entry name" value="CTP_synthase_N"/>
</dbReference>
<dbReference type="InterPro" id="IPR017926">
    <property type="entry name" value="GATASE"/>
</dbReference>
<dbReference type="InterPro" id="IPR033828">
    <property type="entry name" value="GATase1_CTP_Synthase"/>
</dbReference>
<dbReference type="InterPro" id="IPR027417">
    <property type="entry name" value="P-loop_NTPase"/>
</dbReference>
<dbReference type="NCBIfam" id="NF003792">
    <property type="entry name" value="PRK05380.1"/>
    <property type="match status" value="1"/>
</dbReference>
<dbReference type="NCBIfam" id="TIGR00337">
    <property type="entry name" value="PyrG"/>
    <property type="match status" value="1"/>
</dbReference>
<dbReference type="PANTHER" id="PTHR11550">
    <property type="entry name" value="CTP SYNTHASE"/>
    <property type="match status" value="1"/>
</dbReference>
<dbReference type="PANTHER" id="PTHR11550:SF0">
    <property type="entry name" value="CTP SYNTHASE-RELATED"/>
    <property type="match status" value="1"/>
</dbReference>
<dbReference type="Pfam" id="PF06418">
    <property type="entry name" value="CTP_synth_N"/>
    <property type="match status" value="1"/>
</dbReference>
<dbReference type="Pfam" id="PF00117">
    <property type="entry name" value="GATase"/>
    <property type="match status" value="1"/>
</dbReference>
<dbReference type="SUPFAM" id="SSF52317">
    <property type="entry name" value="Class I glutamine amidotransferase-like"/>
    <property type="match status" value="1"/>
</dbReference>
<dbReference type="SUPFAM" id="SSF52540">
    <property type="entry name" value="P-loop containing nucleoside triphosphate hydrolases"/>
    <property type="match status" value="1"/>
</dbReference>
<dbReference type="PROSITE" id="PS51273">
    <property type="entry name" value="GATASE_TYPE_1"/>
    <property type="match status" value="1"/>
</dbReference>
<gene>
    <name evidence="1" type="primary">pyrG</name>
    <name type="ordered locus">CCNA_01791</name>
</gene>
<name>PYRG_CAUVN</name>
<feature type="chain" id="PRO_1000164933" description="CTP synthase">
    <location>
        <begin position="1"/>
        <end position="550"/>
    </location>
</feature>
<feature type="domain" description="Glutamine amidotransferase type-1" evidence="1">
    <location>
        <begin position="297"/>
        <end position="549"/>
    </location>
</feature>
<feature type="region of interest" description="Amidoligase domain" evidence="1">
    <location>
        <begin position="1"/>
        <end position="271"/>
    </location>
</feature>
<feature type="active site" description="Nucleophile; for glutamine hydrolysis" evidence="1">
    <location>
        <position position="388"/>
    </location>
</feature>
<feature type="active site" evidence="1">
    <location>
        <position position="522"/>
    </location>
</feature>
<feature type="active site" evidence="1">
    <location>
        <position position="524"/>
    </location>
</feature>
<feature type="binding site" evidence="1">
    <location>
        <position position="13"/>
    </location>
    <ligand>
        <name>CTP</name>
        <dbReference type="ChEBI" id="CHEBI:37563"/>
        <note>allosteric inhibitor</note>
    </ligand>
</feature>
<feature type="binding site" evidence="1">
    <location>
        <position position="13"/>
    </location>
    <ligand>
        <name>UTP</name>
        <dbReference type="ChEBI" id="CHEBI:46398"/>
    </ligand>
</feature>
<feature type="binding site" evidence="1">
    <location>
        <begin position="14"/>
        <end position="19"/>
    </location>
    <ligand>
        <name>ATP</name>
        <dbReference type="ChEBI" id="CHEBI:30616"/>
    </ligand>
</feature>
<feature type="binding site" evidence="1">
    <location>
        <position position="54"/>
    </location>
    <ligand>
        <name>L-glutamine</name>
        <dbReference type="ChEBI" id="CHEBI:58359"/>
    </ligand>
</feature>
<feature type="binding site" evidence="1">
    <location>
        <position position="71"/>
    </location>
    <ligand>
        <name>ATP</name>
        <dbReference type="ChEBI" id="CHEBI:30616"/>
    </ligand>
</feature>
<feature type="binding site" evidence="1">
    <location>
        <position position="71"/>
    </location>
    <ligand>
        <name>Mg(2+)</name>
        <dbReference type="ChEBI" id="CHEBI:18420"/>
    </ligand>
</feature>
<feature type="binding site" evidence="1">
    <location>
        <position position="145"/>
    </location>
    <ligand>
        <name>Mg(2+)</name>
        <dbReference type="ChEBI" id="CHEBI:18420"/>
    </ligand>
</feature>
<feature type="binding site" evidence="1">
    <location>
        <begin position="152"/>
        <end position="154"/>
    </location>
    <ligand>
        <name>CTP</name>
        <dbReference type="ChEBI" id="CHEBI:37563"/>
        <note>allosteric inhibitor</note>
    </ligand>
</feature>
<feature type="binding site" evidence="1">
    <location>
        <begin position="192"/>
        <end position="197"/>
    </location>
    <ligand>
        <name>CTP</name>
        <dbReference type="ChEBI" id="CHEBI:37563"/>
        <note>allosteric inhibitor</note>
    </ligand>
</feature>
<feature type="binding site" evidence="1">
    <location>
        <begin position="192"/>
        <end position="197"/>
    </location>
    <ligand>
        <name>UTP</name>
        <dbReference type="ChEBI" id="CHEBI:46398"/>
    </ligand>
</feature>
<feature type="binding site" evidence="1">
    <location>
        <position position="228"/>
    </location>
    <ligand>
        <name>CTP</name>
        <dbReference type="ChEBI" id="CHEBI:37563"/>
        <note>allosteric inhibitor</note>
    </ligand>
</feature>
<feature type="binding site" evidence="1">
    <location>
        <position position="228"/>
    </location>
    <ligand>
        <name>UTP</name>
        <dbReference type="ChEBI" id="CHEBI:46398"/>
    </ligand>
</feature>
<feature type="binding site" evidence="1">
    <location>
        <position position="361"/>
    </location>
    <ligand>
        <name>L-glutamine</name>
        <dbReference type="ChEBI" id="CHEBI:58359"/>
    </ligand>
</feature>
<feature type="binding site" evidence="1">
    <location>
        <begin position="389"/>
        <end position="392"/>
    </location>
    <ligand>
        <name>L-glutamine</name>
        <dbReference type="ChEBI" id="CHEBI:58359"/>
    </ligand>
</feature>
<feature type="binding site" evidence="1">
    <location>
        <position position="412"/>
    </location>
    <ligand>
        <name>L-glutamine</name>
        <dbReference type="ChEBI" id="CHEBI:58359"/>
    </ligand>
</feature>
<feature type="binding site" evidence="1">
    <location>
        <position position="477"/>
    </location>
    <ligand>
        <name>L-glutamine</name>
        <dbReference type="ChEBI" id="CHEBI:58359"/>
    </ligand>
</feature>
<protein>
    <recommendedName>
        <fullName evidence="1">CTP synthase</fullName>
        <ecNumber evidence="1">6.3.4.2</ecNumber>
    </recommendedName>
    <alternativeName>
        <fullName evidence="1">Cytidine 5'-triphosphate synthase</fullName>
    </alternativeName>
    <alternativeName>
        <fullName evidence="1">Cytidine triphosphate synthetase</fullName>
        <shortName evidence="1">CTP synthetase</shortName>
        <shortName evidence="1">CTPS</shortName>
    </alternativeName>
    <alternativeName>
        <fullName evidence="1">UTP--ammonia ligase</fullName>
    </alternativeName>
</protein>
<organism>
    <name type="scientific">Caulobacter vibrioides (strain NA1000 / CB15N)</name>
    <name type="common">Caulobacter crescentus</name>
    <dbReference type="NCBI Taxonomy" id="565050"/>
    <lineage>
        <taxon>Bacteria</taxon>
        <taxon>Pseudomonadati</taxon>
        <taxon>Pseudomonadota</taxon>
        <taxon>Alphaproteobacteria</taxon>
        <taxon>Caulobacterales</taxon>
        <taxon>Caulobacteraceae</taxon>
        <taxon>Caulobacter</taxon>
    </lineage>
</organism>
<sequence>MTRYIFITGGVVSSLGKGLASAALGALLQARGYKVRLRKLDPYLNVDPGTMSPYQHGEVFVTDDGAETDLDLGHYERFTGVSATKADNITTGQIYKTIIEKERRGDYLGATVQVIPHVTNEIKDFVLSPAMDETGEKAVDFVLVEIGGTVGDIEGLPFFEAIRQLRQDLPRGQSCYVHLTLLPFIKTAGEMKTKPTQHSVKELRSIGIQPDILLCRCEQEIPPEEKRKIAQFCNVRPSAVIQAMDSSSIYAVPIDYHEQGLDAEVLDVFGMRDAPAPDLTRWKTIDDTVQHPDGEVTIAVVGKYTVLKDAYKSLIEALHHGGLANKVKVNLDWVESETFEGDEGAAAARLENAHAIMVPGGFGERGAEGKIRAAQFARERKVPYFGICFGMQMAVIETLRNVAGIKDASSSEFGPTERPVVGIMTEWIKGNETVQRRANDDLGGTMRLGAYDAVLTAGSKIAEIYGATEISERHRHRYEVNIGYVHLMEDAGLKLTGRSPNGVLPEIVERDDHPWFIGVQYHPELKSRPFAPHPLFASFIAAAKEHGRLV</sequence>
<proteinExistence type="inferred from homology"/>